<dbReference type="EC" id="3.1.3.16" evidence="8"/>
<dbReference type="EC" id="3.1.3.48" evidence="8"/>
<dbReference type="EMBL" id="U61110">
    <property type="protein sequence ID" value="AAB48017.1"/>
    <property type="status" value="ALT_FRAME"/>
    <property type="molecule type" value="mRNA"/>
</dbReference>
<dbReference type="EMBL" id="Y10263">
    <property type="protein sequence ID" value="CAA71312.1"/>
    <property type="molecule type" value="Genomic_DNA"/>
</dbReference>
<dbReference type="EMBL" id="AC119875">
    <property type="status" value="NOT_ANNOTATED_CDS"/>
    <property type="molecule type" value="Genomic_DNA"/>
</dbReference>
<dbReference type="EMBL" id="AC156988">
    <property type="status" value="NOT_ANNOTATED_CDS"/>
    <property type="molecule type" value="Genomic_DNA"/>
</dbReference>
<dbReference type="EMBL" id="CH466536">
    <property type="protein sequence ID" value="EDL14327.1"/>
    <property type="molecule type" value="Genomic_DNA"/>
</dbReference>
<dbReference type="EMBL" id="AF097544">
    <property type="protein sequence ID" value="AAD19355.1"/>
    <property type="molecule type" value="Genomic_DNA"/>
</dbReference>
<dbReference type="EMBL" id="AJ007995">
    <property type="protein sequence ID" value="CAA07818.1"/>
    <property type="molecule type" value="mRNA"/>
</dbReference>
<dbReference type="CCDS" id="CCDS78545.1">
    <molecule id="P97767-1"/>
</dbReference>
<dbReference type="RefSeq" id="NP_001297388.1">
    <molecule id="P97767-1"/>
    <property type="nucleotide sequence ID" value="NM_001310459.2"/>
</dbReference>
<dbReference type="RefSeq" id="XP_017170837.1">
    <molecule id="P97767-1"/>
    <property type="nucleotide sequence ID" value="XM_017315348.3"/>
</dbReference>
<dbReference type="SMR" id="P97767"/>
<dbReference type="BioGRID" id="199559">
    <property type="interactions" value="16"/>
</dbReference>
<dbReference type="CORUM" id="P97767"/>
<dbReference type="FunCoup" id="P97767">
    <property type="interactions" value="1145"/>
</dbReference>
<dbReference type="IntAct" id="P97767">
    <property type="interactions" value="5"/>
</dbReference>
<dbReference type="STRING" id="10090.ENSMUSP00000027066"/>
<dbReference type="GlyGen" id="P97767">
    <property type="glycosylation" value="1 site"/>
</dbReference>
<dbReference type="iPTMnet" id="P97767"/>
<dbReference type="PhosphoSitePlus" id="P97767"/>
<dbReference type="PaxDb" id="10090-ENSMUSP00000079493"/>
<dbReference type="ProteomicsDB" id="275954">
    <molecule id="P97767-1"/>
</dbReference>
<dbReference type="ProteomicsDB" id="275955">
    <molecule id="P97767-2"/>
</dbReference>
<dbReference type="Antibodypedia" id="25098">
    <property type="antibodies" value="221 antibodies from 30 providers"/>
</dbReference>
<dbReference type="DNASU" id="14048"/>
<dbReference type="Ensembl" id="ENSMUST00000027066.13">
    <molecule id="P97767-1"/>
    <property type="protein sequence ID" value="ENSMUSP00000027066.7"/>
    <property type="gene ID" value="ENSMUSG00000025932.15"/>
</dbReference>
<dbReference type="Ensembl" id="ENSMUST00000190337.7">
    <molecule id="P97767-1"/>
    <property type="protein sequence ID" value="ENSMUSP00000141112.2"/>
    <property type="gene ID" value="ENSMUSG00000025932.15"/>
</dbReference>
<dbReference type="GeneID" id="14048"/>
<dbReference type="KEGG" id="mmu:14048"/>
<dbReference type="UCSC" id="uc007aiw.1">
    <molecule id="P97767-1"/>
    <property type="organism name" value="mouse"/>
</dbReference>
<dbReference type="AGR" id="MGI:109344"/>
<dbReference type="CTD" id="2138"/>
<dbReference type="MGI" id="MGI:109344">
    <property type="gene designation" value="Eya1"/>
</dbReference>
<dbReference type="VEuPathDB" id="HostDB:ENSMUSG00000025932"/>
<dbReference type="eggNOG" id="KOG3107">
    <property type="taxonomic scope" value="Eukaryota"/>
</dbReference>
<dbReference type="GeneTree" id="ENSGT00950000182978"/>
<dbReference type="InParanoid" id="P97767"/>
<dbReference type="OMA" id="QCASANN"/>
<dbReference type="OrthoDB" id="167668at2759"/>
<dbReference type="PhylomeDB" id="P97767"/>
<dbReference type="TreeFam" id="TF319337"/>
<dbReference type="Reactome" id="R-MMU-5693565">
    <property type="pathway name" value="Recruitment and ATM-mediated phosphorylation of repair and signaling proteins at DNA double strand breaks"/>
</dbReference>
<dbReference type="SABIO-RK" id="P97767"/>
<dbReference type="BioGRID-ORCS" id="14048">
    <property type="hits" value="2 hits in 102 CRISPR screens"/>
</dbReference>
<dbReference type="ChiTaRS" id="Eya1">
    <property type="organism name" value="mouse"/>
</dbReference>
<dbReference type="PRO" id="PR:P97767"/>
<dbReference type="Proteomes" id="UP000000589">
    <property type="component" value="Chromosome 1"/>
</dbReference>
<dbReference type="RNAct" id="P97767">
    <property type="molecule type" value="protein"/>
</dbReference>
<dbReference type="Bgee" id="ENSMUSG00000025932">
    <property type="expression patterns" value="Expressed in epithelium of cochlear duct and 246 other cell types or tissues"/>
</dbReference>
<dbReference type="ExpressionAtlas" id="P97767">
    <property type="expression patterns" value="baseline and differential"/>
</dbReference>
<dbReference type="GO" id="GO:0005737">
    <property type="term" value="C:cytoplasm"/>
    <property type="evidence" value="ECO:0000314"/>
    <property type="project" value="MGI"/>
</dbReference>
<dbReference type="GO" id="GO:0016604">
    <property type="term" value="C:nuclear body"/>
    <property type="evidence" value="ECO:0007669"/>
    <property type="project" value="Ensembl"/>
</dbReference>
<dbReference type="GO" id="GO:0005654">
    <property type="term" value="C:nucleoplasm"/>
    <property type="evidence" value="ECO:0000304"/>
    <property type="project" value="Reactome"/>
</dbReference>
<dbReference type="GO" id="GO:0005634">
    <property type="term" value="C:nucleus"/>
    <property type="evidence" value="ECO:0000314"/>
    <property type="project" value="MGI"/>
</dbReference>
<dbReference type="GO" id="GO:0032991">
    <property type="term" value="C:protein-containing complex"/>
    <property type="evidence" value="ECO:0000314"/>
    <property type="project" value="UniProtKB"/>
</dbReference>
<dbReference type="GO" id="GO:0032993">
    <property type="term" value="C:protein-DNA complex"/>
    <property type="evidence" value="ECO:0000314"/>
    <property type="project" value="UniProtKB"/>
</dbReference>
<dbReference type="GO" id="GO:0140793">
    <property type="term" value="F:histone H2AXY142 phosphatase activity"/>
    <property type="evidence" value="ECO:0000250"/>
    <property type="project" value="UniProtKB"/>
</dbReference>
<dbReference type="GO" id="GO:0046872">
    <property type="term" value="F:metal ion binding"/>
    <property type="evidence" value="ECO:0007669"/>
    <property type="project" value="UniProtKB-KW"/>
</dbReference>
<dbReference type="GO" id="GO:0004722">
    <property type="term" value="F:protein serine/threonine phosphatase activity"/>
    <property type="evidence" value="ECO:0007669"/>
    <property type="project" value="UniProtKB-EC"/>
</dbReference>
<dbReference type="GO" id="GO:0004725">
    <property type="term" value="F:protein tyrosine phosphatase activity"/>
    <property type="evidence" value="ECO:0000314"/>
    <property type="project" value="MGI"/>
</dbReference>
<dbReference type="GO" id="GO:0003723">
    <property type="term" value="F:RNA binding"/>
    <property type="evidence" value="ECO:0000314"/>
    <property type="project" value="MGI"/>
</dbReference>
<dbReference type="GO" id="GO:0009887">
    <property type="term" value="P:animal organ morphogenesis"/>
    <property type="evidence" value="ECO:0000315"/>
    <property type="project" value="MGI"/>
</dbReference>
<dbReference type="GO" id="GO:0035909">
    <property type="term" value="P:aorta morphogenesis"/>
    <property type="evidence" value="ECO:0000315"/>
    <property type="project" value="MGI"/>
</dbReference>
<dbReference type="GO" id="GO:0001658">
    <property type="term" value="P:branching involved in ureteric bud morphogenesis"/>
    <property type="evidence" value="ECO:0000316"/>
    <property type="project" value="MGI"/>
</dbReference>
<dbReference type="GO" id="GO:0045165">
    <property type="term" value="P:cell fate commitment"/>
    <property type="evidence" value="ECO:0000315"/>
    <property type="project" value="MGI"/>
</dbReference>
<dbReference type="GO" id="GO:0090103">
    <property type="term" value="P:cochlea morphogenesis"/>
    <property type="evidence" value="ECO:0000315"/>
    <property type="project" value="MGI"/>
</dbReference>
<dbReference type="GO" id="GO:0006302">
    <property type="term" value="P:double-strand break repair"/>
    <property type="evidence" value="ECO:0000250"/>
    <property type="project" value="UniProtKB"/>
</dbReference>
<dbReference type="GO" id="GO:0048704">
    <property type="term" value="P:embryonic skeletal system morphogenesis"/>
    <property type="evidence" value="ECO:0000315"/>
    <property type="project" value="MGI"/>
</dbReference>
<dbReference type="GO" id="GO:0050673">
    <property type="term" value="P:epithelial cell proliferation"/>
    <property type="evidence" value="ECO:0000315"/>
    <property type="project" value="MGI"/>
</dbReference>
<dbReference type="GO" id="GO:0097192">
    <property type="term" value="P:extrinsic apoptotic signaling pathway in absence of ligand"/>
    <property type="evidence" value="ECO:0000315"/>
    <property type="project" value="MGI"/>
</dbReference>
<dbReference type="GO" id="GO:0042472">
    <property type="term" value="P:inner ear morphogenesis"/>
    <property type="evidence" value="ECO:0000315"/>
    <property type="project" value="MGI"/>
</dbReference>
<dbReference type="GO" id="GO:0007501">
    <property type="term" value="P:mesodermal cell fate specification"/>
    <property type="evidence" value="ECO:0000314"/>
    <property type="project" value="UniProtKB"/>
</dbReference>
<dbReference type="GO" id="GO:0001656">
    <property type="term" value="P:metanephros development"/>
    <property type="evidence" value="ECO:0000315"/>
    <property type="project" value="MGI"/>
</dbReference>
<dbReference type="GO" id="GO:0042474">
    <property type="term" value="P:middle ear morphogenesis"/>
    <property type="evidence" value="ECO:0000315"/>
    <property type="project" value="MGI"/>
</dbReference>
<dbReference type="GO" id="GO:2001240">
    <property type="term" value="P:negative regulation of extrinsic apoptotic signaling pathway in absence of ligand"/>
    <property type="evidence" value="ECO:0000315"/>
    <property type="project" value="MGI"/>
</dbReference>
<dbReference type="GO" id="GO:0048665">
    <property type="term" value="P:neuron fate specification"/>
    <property type="evidence" value="ECO:0000316"/>
    <property type="project" value="MGI"/>
</dbReference>
<dbReference type="GO" id="GO:0071599">
    <property type="term" value="P:otic vesicle development"/>
    <property type="evidence" value="ECO:0000316"/>
    <property type="project" value="MGI"/>
</dbReference>
<dbReference type="GO" id="GO:0071600">
    <property type="term" value="P:otic vesicle morphogenesis"/>
    <property type="evidence" value="ECO:0000315"/>
    <property type="project" value="MGI"/>
</dbReference>
<dbReference type="GO" id="GO:0042473">
    <property type="term" value="P:outer ear morphogenesis"/>
    <property type="evidence" value="ECO:0000315"/>
    <property type="project" value="MGI"/>
</dbReference>
<dbReference type="GO" id="GO:0003151">
    <property type="term" value="P:outflow tract morphogenesis"/>
    <property type="evidence" value="ECO:0000315"/>
    <property type="project" value="MGI"/>
</dbReference>
<dbReference type="GO" id="GO:0007389">
    <property type="term" value="P:pattern specification process"/>
    <property type="evidence" value="ECO:0000315"/>
    <property type="project" value="MGI"/>
</dbReference>
<dbReference type="GO" id="GO:0060037">
    <property type="term" value="P:pharyngeal system development"/>
    <property type="evidence" value="ECO:0000315"/>
    <property type="project" value="MGI"/>
</dbReference>
<dbReference type="GO" id="GO:0045739">
    <property type="term" value="P:positive regulation of DNA repair"/>
    <property type="evidence" value="ECO:0000250"/>
    <property type="project" value="UniProtKB"/>
</dbReference>
<dbReference type="GO" id="GO:0045893">
    <property type="term" value="P:positive regulation of DNA-templated transcription"/>
    <property type="evidence" value="ECO:0000314"/>
    <property type="project" value="UniProtKB"/>
</dbReference>
<dbReference type="GO" id="GO:0050679">
    <property type="term" value="P:positive regulation of epithelial cell proliferation"/>
    <property type="evidence" value="ECO:0000315"/>
    <property type="project" value="MGI"/>
</dbReference>
<dbReference type="GO" id="GO:0072513">
    <property type="term" value="P:positive regulation of secondary heart field cardioblast proliferation"/>
    <property type="evidence" value="ECO:0000316"/>
    <property type="project" value="MGI"/>
</dbReference>
<dbReference type="GO" id="GO:0045944">
    <property type="term" value="P:positive regulation of transcription by RNA polymerase II"/>
    <property type="evidence" value="ECO:0000316"/>
    <property type="project" value="MGI"/>
</dbReference>
<dbReference type="GO" id="GO:0016925">
    <property type="term" value="P:protein sumoylation"/>
    <property type="evidence" value="ECO:0000314"/>
    <property type="project" value="UniProtKB"/>
</dbReference>
<dbReference type="GO" id="GO:0045664">
    <property type="term" value="P:regulation of neuron differentiation"/>
    <property type="evidence" value="ECO:0000315"/>
    <property type="project" value="MGI"/>
</dbReference>
<dbReference type="GO" id="GO:0010212">
    <property type="term" value="P:response to ionizing radiation"/>
    <property type="evidence" value="ECO:0000250"/>
    <property type="project" value="UniProtKB"/>
</dbReference>
<dbReference type="GO" id="GO:0048752">
    <property type="term" value="P:semicircular canal morphogenesis"/>
    <property type="evidence" value="ECO:0000315"/>
    <property type="project" value="MGI"/>
</dbReference>
<dbReference type="GO" id="GO:0014706">
    <property type="term" value="P:striated muscle tissue development"/>
    <property type="evidence" value="ECO:0000316"/>
    <property type="project" value="MGI"/>
</dbReference>
<dbReference type="GO" id="GO:0001657">
    <property type="term" value="P:ureteric bud development"/>
    <property type="evidence" value="ECO:0000316"/>
    <property type="project" value="MGI"/>
</dbReference>
<dbReference type="CDD" id="cd02601">
    <property type="entry name" value="HAD_Eya"/>
    <property type="match status" value="1"/>
</dbReference>
<dbReference type="FunFam" id="3.40.50.12350:FF:000001">
    <property type="entry name" value="Eyes absent homolog"/>
    <property type="match status" value="1"/>
</dbReference>
<dbReference type="Gene3D" id="3.40.50.12350">
    <property type="match status" value="1"/>
</dbReference>
<dbReference type="InterPro" id="IPR028472">
    <property type="entry name" value="EYA"/>
</dbReference>
<dbReference type="InterPro" id="IPR006545">
    <property type="entry name" value="EYA_dom"/>
</dbReference>
<dbReference type="InterPro" id="IPR042577">
    <property type="entry name" value="EYA_dom_metazoan"/>
</dbReference>
<dbReference type="InterPro" id="IPR038102">
    <property type="entry name" value="EYA_dom_sf"/>
</dbReference>
<dbReference type="NCBIfam" id="TIGR01658">
    <property type="entry name" value="EYA-cons_domain"/>
    <property type="match status" value="1"/>
</dbReference>
<dbReference type="PANTHER" id="PTHR10190">
    <property type="entry name" value="EYES ABSENT"/>
    <property type="match status" value="1"/>
</dbReference>
<dbReference type="PANTHER" id="PTHR10190:SF11">
    <property type="entry name" value="EYES ABSENT HOMOLOG 1"/>
    <property type="match status" value="1"/>
</dbReference>
<dbReference type="Pfam" id="PF00702">
    <property type="entry name" value="Hydrolase"/>
    <property type="match status" value="1"/>
</dbReference>
<dbReference type="SFLD" id="SFLDG01129">
    <property type="entry name" value="C1.5:_HAD__Beta-PGM__Phosphata"/>
    <property type="match status" value="1"/>
</dbReference>
<dbReference type="SFLD" id="SFLDS00003">
    <property type="entry name" value="Haloacid_Dehalogenase"/>
    <property type="match status" value="1"/>
</dbReference>
<reference key="1">
    <citation type="journal article" date="1997" name="Development">
        <title>Mouse Eya homologues of the Drosophila eyes absent gene require Pax6 for expression in lens and nasal placode.</title>
        <authorList>
            <person name="Xu P.-X."/>
            <person name="Woo I."/>
            <person name="Her H."/>
            <person name="Beier D.R."/>
            <person name="Maas R.L."/>
        </authorList>
    </citation>
    <scope>NUCLEOTIDE SEQUENCE [MRNA] (ISOFORM 1)</scope>
    <scope>TISSUE SPECIFICITY</scope>
    <source>
        <tissue>Embryo</tissue>
    </source>
</reference>
<reference key="2">
    <citation type="journal article" date="1997" name="Nat. Genet.">
        <title>A human homologue of the Drosophila eyes absent gene underlies branchio-oto-renal (BOR) syndrome and identifies a novel gene family.</title>
        <authorList>
            <person name="Abdelhak S."/>
            <person name="Kalatzis V."/>
            <person name="Heilig R."/>
            <person name="Compain S."/>
            <person name="Samson D."/>
            <person name="Vincent C."/>
            <person name="Weil D."/>
            <person name="Cruaud C."/>
            <person name="Sahly I."/>
            <person name="Leibovici M."/>
            <person name="Bitner-Glindzicz M."/>
            <person name="Francis M."/>
            <person name="Lacombe D."/>
            <person name="Vigneron J."/>
            <person name="Charachon R."/>
            <person name="Boven K."/>
            <person name="Bedbeder P."/>
            <person name="van Regemorter N."/>
            <person name="Weissenbach J."/>
            <person name="Petit C."/>
        </authorList>
    </citation>
    <scope>NUCLEOTIDE SEQUENCE [GENOMIC DNA] (ISOFORM 2)</scope>
    <source>
        <strain>CB/20</strain>
    </source>
</reference>
<reference key="3">
    <citation type="journal article" date="2009" name="PLoS Biol.">
        <title>Lineage-specific biology revealed by a finished genome assembly of the mouse.</title>
        <authorList>
            <person name="Church D.M."/>
            <person name="Goodstadt L."/>
            <person name="Hillier L.W."/>
            <person name="Zody M.C."/>
            <person name="Goldstein S."/>
            <person name="She X."/>
            <person name="Bult C.J."/>
            <person name="Agarwala R."/>
            <person name="Cherry J.L."/>
            <person name="DiCuccio M."/>
            <person name="Hlavina W."/>
            <person name="Kapustin Y."/>
            <person name="Meric P."/>
            <person name="Maglott D."/>
            <person name="Birtle Z."/>
            <person name="Marques A.C."/>
            <person name="Graves T."/>
            <person name="Zhou S."/>
            <person name="Teague B."/>
            <person name="Potamousis K."/>
            <person name="Churas C."/>
            <person name="Place M."/>
            <person name="Herschleb J."/>
            <person name="Runnheim R."/>
            <person name="Forrest D."/>
            <person name="Amos-Landgraf J."/>
            <person name="Schwartz D.C."/>
            <person name="Cheng Z."/>
            <person name="Lindblad-Toh K."/>
            <person name="Eichler E.E."/>
            <person name="Ponting C.P."/>
        </authorList>
    </citation>
    <scope>NUCLEOTIDE SEQUENCE [LARGE SCALE GENOMIC DNA]</scope>
    <source>
        <strain>C57BL/6J</strain>
    </source>
</reference>
<reference key="4">
    <citation type="submission" date="2005-07" db="EMBL/GenBank/DDBJ databases">
        <authorList>
            <person name="Mural R.J."/>
            <person name="Adams M.D."/>
            <person name="Myers E.W."/>
            <person name="Smith H.O."/>
            <person name="Venter J.C."/>
        </authorList>
    </citation>
    <scope>NUCLEOTIDE SEQUENCE [LARGE SCALE GENOMIC DNA]</scope>
</reference>
<reference key="5">
    <citation type="journal article" date="1999" name="Hum. Mol. Genet.">
        <title>Inner ear and kidney anomalies caused by IAP insertion in an intron of the Eya1 gene in a mouse model of BOR syndrome.</title>
        <authorList>
            <person name="Johnson K.R."/>
            <person name="Cook S.A."/>
            <person name="Erway L.C."/>
            <person name="Matthews A.N."/>
            <person name="Sanford L.P."/>
            <person name="Paradies N.E."/>
            <person name="Friedman R.A."/>
        </authorList>
    </citation>
    <scope>NUCLEOTIDE SEQUENCE [GENOMIC DNA] OF 276-321</scope>
    <scope>DISEASE</scope>
    <source>
        <strain>129/SvJ</strain>
    </source>
</reference>
<reference key="6">
    <citation type="journal article" date="1999" name="Hum. Mol. Genet.">
        <title>EYA4, a novel vertebrate gene related to Drosophila eyes absent.</title>
        <authorList>
            <person name="Borsani G."/>
            <person name="DeGrandi A."/>
            <person name="Ballabio A."/>
            <person name="Bulfone A."/>
            <person name="Bernard L."/>
            <person name="Banfi S."/>
            <person name="Gattuso C."/>
            <person name="Mariani M."/>
            <person name="Dixon M."/>
            <person name="Donnai D."/>
            <person name="Metcalfe K."/>
            <person name="Winter R."/>
            <person name="Robertson M."/>
            <person name="Axton R."/>
            <person name="Brown A."/>
            <person name="van Heyningen V."/>
            <person name="Hanson I."/>
        </authorList>
    </citation>
    <scope>NUCLEOTIDE SEQUENCE [MRNA] OF 431-549</scope>
    <source>
        <tissue>Embryo</tissue>
    </source>
</reference>
<reference key="7">
    <citation type="journal article" date="1999" name="Mol. Cell. Biol.">
        <title>Cooperation of six and eya in activation of their target genes through nuclear translocation of Eya.</title>
        <authorList>
            <person name="Ohto H."/>
            <person name="Kamada S."/>
            <person name="Tago K."/>
            <person name="Tominaga S."/>
            <person name="Ozaki H."/>
            <person name="Sato S."/>
            <person name="Kawakami K."/>
        </authorList>
    </citation>
    <scope>FUNCTION</scope>
    <scope>INTERACTION WITH SIX2; SIX4 AND SIX5</scope>
    <scope>SUBCELLULAR LOCATION</scope>
</reference>
<reference key="8">
    <citation type="journal article" date="1999" name="Nat. Genet.">
        <title>Eya1-deficient mice lack ears and kidneys and show abnormal apoptosis of organ primordia.</title>
        <authorList>
            <person name="Xu P.X."/>
            <person name="Adams J."/>
            <person name="Peters H."/>
            <person name="Brown M.C."/>
            <person name="Heaney S."/>
            <person name="Maas R."/>
        </authorList>
    </citation>
    <scope>DISRUPTION PHENOTYPE</scope>
    <scope>FUNCTION</scope>
</reference>
<reference key="9">
    <citation type="journal article" date="2003" name="Nature">
        <title>Eya protein phosphatase activity regulates Six1-Dach-Eya transcriptional effects in mammalian organogenesis.</title>
        <authorList>
            <person name="Li X."/>
            <person name="Oghi K.A."/>
            <person name="Zhang J."/>
            <person name="Krones A."/>
            <person name="Bush K.T."/>
            <person name="Glass C.K."/>
            <person name="Nigam S.K."/>
            <person name="Aggarwal A.K."/>
            <person name="Maas R."/>
            <person name="Rose D.W."/>
            <person name="Rosenfeld M.G."/>
        </authorList>
    </citation>
    <scope>FUNCTION</scope>
    <scope>CATALYTIC ACTIVITY</scope>
    <scope>DISRUPTION PHENOTYPE</scope>
</reference>
<reference key="10">
    <citation type="journal article" date="2004" name="Nature">
        <authorList>
            <person name="Li X."/>
            <person name="Oghi K.A."/>
            <person name="Zhang J."/>
            <person name="Krones A."/>
            <person name="Bush K.T."/>
            <person name="Glass C.K."/>
            <person name="Nigam S.K."/>
            <person name="Aggarwal A.K."/>
            <person name="Maas R."/>
            <person name="Rose D.W."/>
            <person name="Rosenfeld M.G."/>
        </authorList>
    </citation>
    <scope>ERRATUM OF PUBMED:14628042</scope>
</reference>
<reference key="11">
    <citation type="journal article" date="2003" name="Nature">
        <title>Eyes absent represents a class of protein tyrosine phosphatases.</title>
        <authorList>
            <person name="Rayapureddi J.P."/>
            <person name="Kattamuri C."/>
            <person name="Steinmetz B.D."/>
            <person name="Frankfort B.J."/>
            <person name="Ostrin E.J."/>
            <person name="Mardon G."/>
            <person name="Hegde R.S."/>
        </authorList>
    </citation>
    <scope>CATALYTIC ACTIVITY</scope>
</reference>
<reference key="12">
    <citation type="journal article" date="2005" name="Gene Expr. Patterns">
        <title>Pax6-dependence of Six3, Eya1 and Dach1 expression during lens and nasal placode induction.</title>
        <authorList>
            <person name="Purcell P."/>
            <person name="Oliver G."/>
            <person name="Mardon G."/>
            <person name="Donner A.L."/>
            <person name="Maas R.L."/>
        </authorList>
    </citation>
    <scope>INTERACTION WITH SIX3</scope>
</reference>
<reference key="13">
    <citation type="journal article" date="2006" name="Science">
        <title>SUMO1 haploinsufficiency leads to cleft lip and palate.</title>
        <authorList>
            <person name="Alkuraya F.S."/>
            <person name="Saadi I."/>
            <person name="Lund J.J."/>
            <person name="Turbe-Doan A."/>
            <person name="Morton C.C."/>
            <person name="Maas R.L."/>
        </authorList>
    </citation>
    <scope>SUMOYLATION</scope>
    <scope>MUTAGENESIS OF LYS-43 AND LYS-459</scope>
</reference>
<reference key="14">
    <citation type="journal article" date="2007" name="Dev. Biol.">
        <title>Eya1 and Eya2 proteins are required for hypaxial somitic myogenesis in the mouse embryo.</title>
        <authorList>
            <person name="Grifone R."/>
            <person name="Demignon J."/>
            <person name="Giordani J."/>
            <person name="Niro C."/>
            <person name="Souil E."/>
            <person name="Bertin F."/>
            <person name="Laclef C."/>
            <person name="Xu P.X."/>
            <person name="Maire P."/>
        </authorList>
    </citation>
    <scope>DISRUPTION PHENOTYPE</scope>
    <scope>FUNCTION</scope>
</reference>
<reference key="15">
    <citation type="journal article" date="2009" name="Nature">
        <title>Tyrosine dephosphorylation of H2AX modulates apoptosis and survival decisions.</title>
        <authorList>
            <person name="Cook P.J."/>
            <person name="Ju B.G."/>
            <person name="Telese F."/>
            <person name="Wang X."/>
            <person name="Glass C.K."/>
            <person name="Rosenfeld M.G."/>
        </authorList>
    </citation>
    <scope>DISRUPTION PHENOTYPE</scope>
    <scope>FUNCTION</scope>
    <scope>SUBCELLULAR LOCATION</scope>
    <scope>INTERACTION WITH H2AX</scope>
</reference>
<keyword id="KW-0010">Activator</keyword>
<keyword id="KW-0025">Alternative splicing</keyword>
<keyword id="KW-0156">Chromatin regulator</keyword>
<keyword id="KW-0963">Cytoplasm</keyword>
<keyword id="KW-0217">Developmental protein</keyword>
<keyword id="KW-0227">DNA damage</keyword>
<keyword id="KW-0234">DNA repair</keyword>
<keyword id="KW-0378">Hydrolase</keyword>
<keyword id="KW-0460">Magnesium</keyword>
<keyword id="KW-0479">Metal-binding</keyword>
<keyword id="KW-0539">Nucleus</keyword>
<keyword id="KW-0904">Protein phosphatase</keyword>
<keyword id="KW-1185">Reference proteome</keyword>
<keyword id="KW-0804">Transcription</keyword>
<keyword id="KW-0805">Transcription regulation</keyword>
<keyword id="KW-0832">Ubl conjugation</keyword>
<comment type="function">
    <text evidence="5 6 7 11 12">Functions both as protein phosphatase and as transcriptional coactivator for SIX1, and probably also for SIX2, SIX4 and SIX5 (PubMed:10490620). Tyrosine phosphatase that dephosphorylates 'Tyr-142' of histone H2AX (H2AXY142ph) and promotes efficient DNA repair via the recruitment of DNA repair complexes containing MDC1. 'Tyr-142' phosphorylation of histone H2AX plays a central role in DNA repair and acts as a mark that distinguishes between apoptotic and repair responses to genotoxic stress (PubMed:19234442). Its function as histone phosphatase may contribute to its function in transcription regulation during organogenesis (PubMed:14628042). Also has phosphatase activity with proteins phosphorylated on Ser and Thr residues (in vitro). Required for normal embryonic development of the craniofacial and trunk skeleton, kidneys and ears (PubMed:10471511). Together with SIX1, it plays an important role in hypaxial muscle development; in this it is functionally redundant with EYA2 (PubMed:17098221).</text>
</comment>
<comment type="catalytic activity">
    <reaction evidence="8">
        <text>O-phospho-L-tyrosyl-[protein] + H2O = L-tyrosyl-[protein] + phosphate</text>
        <dbReference type="Rhea" id="RHEA:10684"/>
        <dbReference type="Rhea" id="RHEA-COMP:10136"/>
        <dbReference type="Rhea" id="RHEA-COMP:20101"/>
        <dbReference type="ChEBI" id="CHEBI:15377"/>
        <dbReference type="ChEBI" id="CHEBI:43474"/>
        <dbReference type="ChEBI" id="CHEBI:46858"/>
        <dbReference type="ChEBI" id="CHEBI:61978"/>
        <dbReference type="EC" id="3.1.3.48"/>
    </reaction>
</comment>
<comment type="catalytic activity">
    <reaction evidence="8">
        <text>O-phospho-L-seryl-[protein] + H2O = L-seryl-[protein] + phosphate</text>
        <dbReference type="Rhea" id="RHEA:20629"/>
        <dbReference type="Rhea" id="RHEA-COMP:9863"/>
        <dbReference type="Rhea" id="RHEA-COMP:11604"/>
        <dbReference type="ChEBI" id="CHEBI:15377"/>
        <dbReference type="ChEBI" id="CHEBI:29999"/>
        <dbReference type="ChEBI" id="CHEBI:43474"/>
        <dbReference type="ChEBI" id="CHEBI:83421"/>
        <dbReference type="EC" id="3.1.3.16"/>
    </reaction>
</comment>
<comment type="catalytic activity">
    <reaction evidence="8">
        <text>O-phospho-L-threonyl-[protein] + H2O = L-threonyl-[protein] + phosphate</text>
        <dbReference type="Rhea" id="RHEA:47004"/>
        <dbReference type="Rhea" id="RHEA-COMP:11060"/>
        <dbReference type="Rhea" id="RHEA-COMP:11605"/>
        <dbReference type="ChEBI" id="CHEBI:15377"/>
        <dbReference type="ChEBI" id="CHEBI:30013"/>
        <dbReference type="ChEBI" id="CHEBI:43474"/>
        <dbReference type="ChEBI" id="CHEBI:61977"/>
        <dbReference type="EC" id="3.1.3.16"/>
    </reaction>
</comment>
<comment type="cofactor">
    <cofactor evidence="1">
        <name>Mg(2+)</name>
        <dbReference type="ChEBI" id="CHEBI:18420"/>
    </cofactor>
    <text evidence="1">Binds 1 Mg(2+) ion per subunit.</text>
</comment>
<comment type="subunit">
    <text evidence="6 9 12">Probably interacts with SIX2, SIX4 and SIX5. Interacts with H2AX in response to DNA damage. Interacts with SIX3; promotes EYA1 translocation to the nucleus.</text>
</comment>
<comment type="interaction">
    <interactant intactId="EBI-1368503">
        <id>P97767</id>
    </interactant>
    <interactant intactId="EBI-6141072">
        <id>Q9WUB0</id>
        <label>Rbck1</label>
    </interactant>
    <organismsDiffer>false</organismsDiffer>
    <experiments>2</experiments>
</comment>
<comment type="interaction">
    <interactant intactId="EBI-1368503">
        <id>P97767</id>
    </interactant>
    <interactant intactId="EBI-646097">
        <id>Q91WA6</id>
        <label>Sharpin</label>
    </interactant>
    <organismsDiffer>false</organismsDiffer>
    <experiments>4</experiments>
</comment>
<comment type="interaction">
    <interactant intactId="EBI-1368503">
        <id>P97767</id>
    </interactant>
    <interactant intactId="EBI-1368483">
        <id>Q62231</id>
        <label>Six1</label>
    </interactant>
    <organismsDiffer>false</organismsDiffer>
    <experiments>3</experiments>
</comment>
<comment type="interaction">
    <interactant intactId="EBI-1368503">
        <id>P97767</id>
    </interactant>
    <interactant intactId="EBI-1368736">
        <id>Q62232</id>
        <label>Six2</label>
    </interactant>
    <organismsDiffer>false</organismsDiffer>
    <experiments>3</experiments>
</comment>
<comment type="subcellular location">
    <subcellularLocation>
        <location evidence="6">Cytoplasm</location>
    </subcellularLocation>
    <subcellularLocation>
        <location evidence="6 12">Nucleus</location>
    </subcellularLocation>
    <text evidence="2">Localizes at sites of DNA damage at double-strand breaks (DSBs).</text>
</comment>
<comment type="alternative products">
    <event type="alternative splicing"/>
    <isoform>
        <id>P97767-1</id>
        <name>1</name>
        <sequence type="displayed"/>
    </isoform>
    <isoform>
        <id>P97767-2</id>
        <name>2</name>
        <sequence type="described" ref="VSP_001487 VSP_001488"/>
    </isoform>
</comment>
<comment type="tissue specificity">
    <text evidence="13">Extensively expressed in cranial placodes, branchial arches, CNS and developing eye and nose.</text>
</comment>
<comment type="PTM">
    <text evidence="10">Sumoylated with SUMO1.</text>
</comment>
<comment type="disease">
    <text evidence="4">A spontaneous mutation leading to decreased Eya1 expression gives rise to the Eya1-bor phenotype. It is characterized by circling behavior and deafness, due to gross morphological abnormalities of the inner ear, and dysmorphic or missing kidneys. This autosomal recessive trait resembles human branchio-oto-renal (BOR) syndrome.</text>
</comment>
<comment type="disruption phenotype">
    <text evidence="5 7 11 12">Complete perinatal lethality in homozygotes, due to severe craniofacial and skeletal defects, combined with an absence of thymus, kidneys, parotid glands and ears. Mice present multiple skeletal defects in skull, neck, rib and pelvic girdle, but no major defects in muscle development. Otic anomalies involve the inner, middle and outer ears, with malformed auricles and eardrums, malformations of the incus, malleus, and stapes, while the tympanic cavity never formed. Likewise, mice display an absence of inner ear structures. Heterozygotes present milder symptoms with low penetrance, including renal defects, similar to human BOR (branchio-oto-renal) syndrome. Increased apoptosis and loss of renal tubules seen in the developing kidney with increased immunostaining for 'Ser-139' phosphorylated H2AX. Mice lacking both Six1 and Eya1 show defects in kidney development, complete absence of hypaxial muscle, severe reduction in epaxial muscle and a 5-10-fold by volume smaller pituarity than the wild-type gland. Mice lacking both Eya1 and Eya2 display complete embryonic lethality, due to severe defects in muscle development, including the absence of a diaphragm and of ventral hypaxial muscles of the trunk and the complete absence of muscles in forelimbs and hindlimbs, similar to the phenotype of mice lacking both Six1 and Six4. While Six1 is normally expressed in these mice, it does not active transcription from cognate promoter elements, and does not activate transcription of Pax3.</text>
</comment>
<comment type="similarity">
    <text evidence="14">Belongs to the HAD-like hydrolase superfamily. EYA family.</text>
</comment>
<comment type="sequence caution" evidence="14">
    <conflict type="frameshift">
        <sequence resource="EMBL-CDS" id="AAB48017"/>
    </conflict>
</comment>
<feature type="chain" id="PRO_0000218644" description="Protein phosphatase EYA1">
    <location>
        <begin position="1"/>
        <end position="591"/>
    </location>
</feature>
<feature type="region of interest" description="Disordered" evidence="3">
    <location>
        <begin position="1"/>
        <end position="95"/>
    </location>
</feature>
<feature type="region of interest" description="Disordered" evidence="3">
    <location>
        <begin position="150"/>
        <end position="169"/>
    </location>
</feature>
<feature type="region of interest" description="Disordered" evidence="3">
    <location>
        <begin position="239"/>
        <end position="319"/>
    </location>
</feature>
<feature type="compositionally biased region" description="Low complexity" evidence="3">
    <location>
        <begin position="8"/>
        <end position="23"/>
    </location>
</feature>
<feature type="compositionally biased region" description="Polar residues" evidence="3">
    <location>
        <begin position="28"/>
        <end position="53"/>
    </location>
</feature>
<feature type="compositionally biased region" description="Low complexity" evidence="3">
    <location>
        <begin position="56"/>
        <end position="75"/>
    </location>
</feature>
<feature type="compositionally biased region" description="Pro residues" evidence="3">
    <location>
        <begin position="78"/>
        <end position="87"/>
    </location>
</feature>
<feature type="compositionally biased region" description="Low complexity" evidence="3">
    <location>
        <begin position="240"/>
        <end position="252"/>
    </location>
</feature>
<feature type="compositionally biased region" description="Polar residues" evidence="3">
    <location>
        <begin position="253"/>
        <end position="286"/>
    </location>
</feature>
<feature type="compositionally biased region" description="Basic and acidic residues" evidence="3">
    <location>
        <begin position="287"/>
        <end position="302"/>
    </location>
</feature>
<feature type="active site" description="Nucleophile" evidence="1">
    <location>
        <position position="327"/>
    </location>
</feature>
<feature type="active site" description="Proton donor" evidence="1">
    <location>
        <position position="329"/>
    </location>
</feature>
<feature type="binding site" evidence="1">
    <location>
        <position position="327"/>
    </location>
    <ligand>
        <name>Mg(2+)</name>
        <dbReference type="ChEBI" id="CHEBI:18420"/>
    </ligand>
</feature>
<feature type="binding site" evidence="1">
    <location>
        <position position="329"/>
    </location>
    <ligand>
        <name>Mg(2+)</name>
        <dbReference type="ChEBI" id="CHEBI:18420"/>
    </ligand>
</feature>
<feature type="binding site" evidence="1">
    <location>
        <position position="555"/>
    </location>
    <ligand>
        <name>Mg(2+)</name>
        <dbReference type="ChEBI" id="CHEBI:18420"/>
    </ligand>
</feature>
<feature type="splice variant" id="VSP_001487" description="In isoform 2." evidence="14">
    <original>MEMQDLTSPHSRLSGSSESPSGPKLDSSHINSTSMTPNGTE</original>
    <variation>MLLFPQVA</variation>
    <location>
        <begin position="1"/>
        <end position="41"/>
    </location>
</feature>
<feature type="splice variant" id="VSP_001488" description="In isoform 2." evidence="14">
    <location>
        <begin position="140"/>
        <end position="144"/>
    </location>
</feature>
<feature type="mutagenesis site" description="Markedly reduced sumoylation; when associated with R-459." evidence="10">
    <original>K</original>
    <variation>R</variation>
    <location>
        <position position="43"/>
    </location>
</feature>
<feature type="mutagenesis site" description="Markedly reduced sumoylation; when associated with R-43." evidence="10">
    <original>K</original>
    <variation>R</variation>
    <location>
        <position position="459"/>
    </location>
</feature>
<feature type="sequence conflict" description="In Ref. 2; CAA71312." evidence="14" ref="2">
    <original>M</original>
    <variation>V</variation>
    <location>
        <position position="117"/>
    </location>
</feature>
<feature type="sequence conflict" description="In Ref. 2; CAA71312." evidence="14" ref="2">
    <original>L</original>
    <variation>F</variation>
    <location>
        <position position="163"/>
    </location>
</feature>
<feature type="sequence conflict" description="In Ref. 1; AAB48017." evidence="14" ref="1">
    <original>FI</original>
    <variation>LL</variation>
    <location>
        <begin position="324"/>
        <end position="325"/>
    </location>
</feature>
<feature type="sequence conflict" description="In Ref. 1; AAB48017." evidence="14" ref="1">
    <original>T</original>
    <variation>R</variation>
    <location>
        <position position="405"/>
    </location>
</feature>
<feature type="sequence conflict" description="In Ref. 1; AAB48017." evidence="14" ref="1">
    <original>N</original>
    <variation>K</variation>
    <location>
        <position position="450"/>
    </location>
</feature>
<feature type="sequence conflict" description="In Ref. 1; AAB48017." evidence="14" ref="1">
    <original>I</original>
    <variation>S</variation>
    <location>
        <position position="505"/>
    </location>
</feature>
<feature type="sequence conflict" description="In Ref. 2; CAA71312." evidence="14" ref="2">
    <original>S</original>
    <variation>G</variation>
    <location>
        <position position="535"/>
    </location>
</feature>
<feature type="sequence conflict" description="In Ref. 2; CAA71312." evidence="14" ref="2">
    <original>R</original>
    <variation>G</variation>
    <location>
        <position position="539"/>
    </location>
</feature>
<feature type="sequence conflict" description="In Ref. 2; CAA71312." evidence="14" ref="2">
    <original>V</original>
    <variation>L</variation>
    <location>
        <position position="548"/>
    </location>
</feature>
<feature type="sequence conflict" description="In Ref. 1; AAB48017." evidence="14" ref="1">
    <original>VV</original>
    <variation>LL</variation>
    <location>
        <begin position="551"/>
        <end position="552"/>
    </location>
</feature>
<feature type="sequence conflict" description="In Ref. 2; CAA71312." evidence="14" ref="2">
    <original>E</original>
    <variation>K</variation>
    <location>
        <position position="559"/>
    </location>
</feature>
<gene>
    <name type="primary">Eya1</name>
</gene>
<evidence type="ECO:0000250" key="1">
    <source>
        <dbReference type="UniProtKB" id="O00167"/>
    </source>
</evidence>
<evidence type="ECO:0000250" key="2">
    <source>
        <dbReference type="UniProtKB" id="Q99502"/>
    </source>
</evidence>
<evidence type="ECO:0000256" key="3">
    <source>
        <dbReference type="SAM" id="MobiDB-lite"/>
    </source>
</evidence>
<evidence type="ECO:0000269" key="4">
    <source>
    </source>
</evidence>
<evidence type="ECO:0000269" key="5">
    <source>
    </source>
</evidence>
<evidence type="ECO:0000269" key="6">
    <source>
    </source>
</evidence>
<evidence type="ECO:0000269" key="7">
    <source>
    </source>
</evidence>
<evidence type="ECO:0000269" key="8">
    <source>
    </source>
</evidence>
<evidence type="ECO:0000269" key="9">
    <source>
    </source>
</evidence>
<evidence type="ECO:0000269" key="10">
    <source>
    </source>
</evidence>
<evidence type="ECO:0000269" key="11">
    <source>
    </source>
</evidence>
<evidence type="ECO:0000269" key="12">
    <source>
    </source>
</evidence>
<evidence type="ECO:0000269" key="13">
    <source>
    </source>
</evidence>
<evidence type="ECO:0000305" key="14"/>
<proteinExistence type="evidence at protein level"/>
<accession>P97767</accession>
<accession>G5E864</accession>
<accession>O08818</accession>
<sequence>MEMQDLTSPHSRLSGSSESPSGPKLDSSHINSTSMTPNGTEVKTEPMSSSEIASTAADGSLDSFSGSALGSSSFSPRPAHPFSPPQIYPSKSYPHILPTPSSQTMAAYGQTQFTTGMQQATAYATYPQPGQPYGISSYGALWAGIKTESGLSQSQSPGQTGFLSYGTSFGTPQPGQAPYSYQMQGSSFTTSSGLYSGNNSLTNSSGFNSSQQDYPSYPGFGQGQYAQYYNSSPYPAHYMTSSNTSPTTPSTNATYQLQEPPSGVTSQAVTDPTAEYSTIHSPSTPIKETDSERLRRGSDGKSRGRGRRNNNPSPPPDSDLERVFIWDLDETIIVFHSLLTGSYANRYGRDPPTSVSLGLRMEEMIFNLADTHLFFNDLEECDQVHIDDVSSDDNGQDLSTYNFGTDGFPAAATSANLCLATGVRGGVDWMRKLAFRYRRVKEIYNTYKNNVGGLLGPAKREAWLQLRAEIEALTDSWLTLALKALSLIHSRTNCVNILVTTTQLIPALAKVLLYGLGIVFPIENIYSATKIGKESCFERIIQRFGRKVVYVVIGDGVEEEQGAKKHAMPFWRVSSHSDLMALHHALELEYL</sequence>
<protein>
    <recommendedName>
        <fullName evidence="14">Protein phosphatase EYA1</fullName>
        <ecNumber evidence="8">3.1.3.16</ecNumber>
        <ecNumber evidence="8">3.1.3.48</ecNumber>
    </recommendedName>
    <alternativeName>
        <fullName>Eyes absent homolog 1</fullName>
    </alternativeName>
</protein>
<name>EYA1_MOUSE</name>
<organism>
    <name type="scientific">Mus musculus</name>
    <name type="common">Mouse</name>
    <dbReference type="NCBI Taxonomy" id="10090"/>
    <lineage>
        <taxon>Eukaryota</taxon>
        <taxon>Metazoa</taxon>
        <taxon>Chordata</taxon>
        <taxon>Craniata</taxon>
        <taxon>Vertebrata</taxon>
        <taxon>Euteleostomi</taxon>
        <taxon>Mammalia</taxon>
        <taxon>Eutheria</taxon>
        <taxon>Euarchontoglires</taxon>
        <taxon>Glires</taxon>
        <taxon>Rodentia</taxon>
        <taxon>Myomorpha</taxon>
        <taxon>Muroidea</taxon>
        <taxon>Muridae</taxon>
        <taxon>Murinae</taxon>
        <taxon>Mus</taxon>
        <taxon>Mus</taxon>
    </lineage>
</organism>